<dbReference type="EMBL" id="CP001107">
    <property type="protein sequence ID" value="ACR74235.1"/>
    <property type="molecule type" value="Genomic_DNA"/>
</dbReference>
<dbReference type="RefSeq" id="WP_012741352.1">
    <property type="nucleotide sequence ID" value="NC_012781.1"/>
</dbReference>
<dbReference type="SMR" id="C4ZBU5"/>
<dbReference type="STRING" id="515619.EUBREC_0444"/>
<dbReference type="PaxDb" id="515619-EUBREC_0444"/>
<dbReference type="GeneID" id="86987355"/>
<dbReference type="KEGG" id="ere:EUBREC_0444"/>
<dbReference type="HOGENOM" id="CLU_092403_0_2_9"/>
<dbReference type="Proteomes" id="UP000001477">
    <property type="component" value="Chromosome"/>
</dbReference>
<dbReference type="GO" id="GO:0015935">
    <property type="term" value="C:small ribosomal subunit"/>
    <property type="evidence" value="ECO:0007669"/>
    <property type="project" value="InterPro"/>
</dbReference>
<dbReference type="GO" id="GO:0019843">
    <property type="term" value="F:rRNA binding"/>
    <property type="evidence" value="ECO:0007669"/>
    <property type="project" value="UniProtKB-UniRule"/>
</dbReference>
<dbReference type="GO" id="GO:0003735">
    <property type="term" value="F:structural constituent of ribosome"/>
    <property type="evidence" value="ECO:0007669"/>
    <property type="project" value="InterPro"/>
</dbReference>
<dbReference type="GO" id="GO:0042274">
    <property type="term" value="P:ribosomal small subunit biogenesis"/>
    <property type="evidence" value="ECO:0007669"/>
    <property type="project" value="TreeGrafter"/>
</dbReference>
<dbReference type="GO" id="GO:0006412">
    <property type="term" value="P:translation"/>
    <property type="evidence" value="ECO:0007669"/>
    <property type="project" value="UniProtKB-UniRule"/>
</dbReference>
<dbReference type="CDD" id="cd00165">
    <property type="entry name" value="S4"/>
    <property type="match status" value="1"/>
</dbReference>
<dbReference type="FunFam" id="3.10.290.10:FF:000001">
    <property type="entry name" value="30S ribosomal protein S4"/>
    <property type="match status" value="1"/>
</dbReference>
<dbReference type="Gene3D" id="1.10.1050.10">
    <property type="entry name" value="Ribosomal Protein S4 Delta 41, Chain A, domain 1"/>
    <property type="match status" value="1"/>
</dbReference>
<dbReference type="Gene3D" id="3.10.290.10">
    <property type="entry name" value="RNA-binding S4 domain"/>
    <property type="match status" value="1"/>
</dbReference>
<dbReference type="HAMAP" id="MF_01306_B">
    <property type="entry name" value="Ribosomal_uS4_B"/>
    <property type="match status" value="1"/>
</dbReference>
<dbReference type="InterPro" id="IPR022801">
    <property type="entry name" value="Ribosomal_uS4"/>
</dbReference>
<dbReference type="InterPro" id="IPR005709">
    <property type="entry name" value="Ribosomal_uS4_bac-type"/>
</dbReference>
<dbReference type="InterPro" id="IPR018079">
    <property type="entry name" value="Ribosomal_uS4_CS"/>
</dbReference>
<dbReference type="InterPro" id="IPR001912">
    <property type="entry name" value="Ribosomal_uS4_N"/>
</dbReference>
<dbReference type="InterPro" id="IPR002942">
    <property type="entry name" value="S4_RNA-bd"/>
</dbReference>
<dbReference type="InterPro" id="IPR036986">
    <property type="entry name" value="S4_RNA-bd_sf"/>
</dbReference>
<dbReference type="NCBIfam" id="NF003717">
    <property type="entry name" value="PRK05327.1"/>
    <property type="match status" value="1"/>
</dbReference>
<dbReference type="NCBIfam" id="TIGR01017">
    <property type="entry name" value="rpsD_bact"/>
    <property type="match status" value="1"/>
</dbReference>
<dbReference type="PANTHER" id="PTHR11831">
    <property type="entry name" value="30S 40S RIBOSOMAL PROTEIN"/>
    <property type="match status" value="1"/>
</dbReference>
<dbReference type="PANTHER" id="PTHR11831:SF4">
    <property type="entry name" value="SMALL RIBOSOMAL SUBUNIT PROTEIN US4M"/>
    <property type="match status" value="1"/>
</dbReference>
<dbReference type="Pfam" id="PF00163">
    <property type="entry name" value="Ribosomal_S4"/>
    <property type="match status" value="1"/>
</dbReference>
<dbReference type="Pfam" id="PF01479">
    <property type="entry name" value="S4"/>
    <property type="match status" value="1"/>
</dbReference>
<dbReference type="SMART" id="SM01390">
    <property type="entry name" value="Ribosomal_S4"/>
    <property type="match status" value="1"/>
</dbReference>
<dbReference type="SMART" id="SM00363">
    <property type="entry name" value="S4"/>
    <property type="match status" value="1"/>
</dbReference>
<dbReference type="SUPFAM" id="SSF55174">
    <property type="entry name" value="Alpha-L RNA-binding motif"/>
    <property type="match status" value="1"/>
</dbReference>
<dbReference type="PROSITE" id="PS00632">
    <property type="entry name" value="RIBOSOMAL_S4"/>
    <property type="match status" value="1"/>
</dbReference>
<dbReference type="PROSITE" id="PS50889">
    <property type="entry name" value="S4"/>
    <property type="match status" value="1"/>
</dbReference>
<feature type="chain" id="PRO_1000214289" description="Small ribosomal subunit protein uS4">
    <location>
        <begin position="1"/>
        <end position="197"/>
    </location>
</feature>
<feature type="domain" description="S4 RNA-binding" evidence="1">
    <location>
        <begin position="87"/>
        <end position="147"/>
    </location>
</feature>
<keyword id="KW-0687">Ribonucleoprotein</keyword>
<keyword id="KW-0689">Ribosomal protein</keyword>
<keyword id="KW-0694">RNA-binding</keyword>
<keyword id="KW-0699">rRNA-binding</keyword>
<name>RS4_AGARV</name>
<sequence length="197" mass="22686">MAVNKVPVLKRCRSLGLEPSYLGYDKKSRRNLTRANRKVSEYGLQLREKQKAKFIYGVLEKPFRNYYKKADQMKGLTGLNLMTILESRIDNVIFRLGFARTRKEARQIVDHKFVTVNGKVVNIPSYLVKAGDVIEIKESKKNTQRMKDIVEVAGGRIVPEWLDVDAEKLQGTVKDLPTREQIDVPVDEMLIVELYSK</sequence>
<accession>C4ZBU5</accession>
<protein>
    <recommendedName>
        <fullName evidence="1">Small ribosomal subunit protein uS4</fullName>
    </recommendedName>
    <alternativeName>
        <fullName evidence="2">30S ribosomal protein S4</fullName>
    </alternativeName>
</protein>
<reference key="1">
    <citation type="journal article" date="2009" name="Proc. Natl. Acad. Sci. U.S.A.">
        <title>Characterizing a model human gut microbiota composed of members of its two dominant bacterial phyla.</title>
        <authorList>
            <person name="Mahowald M.A."/>
            <person name="Rey F.E."/>
            <person name="Seedorf H."/>
            <person name="Turnbaugh P.J."/>
            <person name="Fulton R.S."/>
            <person name="Wollam A."/>
            <person name="Shah N."/>
            <person name="Wang C."/>
            <person name="Magrini V."/>
            <person name="Wilson R.K."/>
            <person name="Cantarel B.L."/>
            <person name="Coutinho P.M."/>
            <person name="Henrissat B."/>
            <person name="Crock L.W."/>
            <person name="Russell A."/>
            <person name="Verberkmoes N.C."/>
            <person name="Hettich R.L."/>
            <person name="Gordon J.I."/>
        </authorList>
    </citation>
    <scope>NUCLEOTIDE SEQUENCE [LARGE SCALE GENOMIC DNA]</scope>
    <source>
        <strain>ATCC 33656 / DSM 3377 / JCM 17463 / KCTC 5835 / LMG 30912 / VPI 0990</strain>
    </source>
</reference>
<proteinExistence type="inferred from homology"/>
<organism>
    <name type="scientific">Agathobacter rectalis (strain ATCC 33656 / DSM 3377 / JCM 17463 / KCTC 5835 / VPI 0990)</name>
    <name type="common">Eubacterium rectale</name>
    <dbReference type="NCBI Taxonomy" id="515619"/>
    <lineage>
        <taxon>Bacteria</taxon>
        <taxon>Bacillati</taxon>
        <taxon>Bacillota</taxon>
        <taxon>Clostridia</taxon>
        <taxon>Lachnospirales</taxon>
        <taxon>Lachnospiraceae</taxon>
        <taxon>Agathobacter</taxon>
    </lineage>
</organism>
<evidence type="ECO:0000255" key="1">
    <source>
        <dbReference type="HAMAP-Rule" id="MF_01306"/>
    </source>
</evidence>
<evidence type="ECO:0000305" key="2"/>
<gene>
    <name evidence="1" type="primary">rpsD</name>
    <name type="ordered locus">EUBREC_0444</name>
</gene>
<comment type="function">
    <text evidence="1">One of the primary rRNA binding proteins, it binds directly to 16S rRNA where it nucleates assembly of the body of the 30S subunit.</text>
</comment>
<comment type="function">
    <text evidence="1">With S5 and S12 plays an important role in translational accuracy.</text>
</comment>
<comment type="subunit">
    <text evidence="1">Part of the 30S ribosomal subunit. Contacts protein S5. The interaction surface between S4 and S5 is involved in control of translational fidelity.</text>
</comment>
<comment type="similarity">
    <text evidence="1">Belongs to the universal ribosomal protein uS4 family.</text>
</comment>